<comment type="function">
    <text evidence="1 2">Has a dual role in the assembly of mitochondrial ATPase. Acts as a protease that removes the N-terminal 10 residues of mitochondrial ATPase CF(0) subunit 6 (ATP6) at the intermembrane space side. Also involved in the correct assembly of the membrane-embedded ATPase CF(0) particle, probably mediating association of ATP6 with the subunit 9 ring.</text>
</comment>
<comment type="subunit">
    <text evidence="1">Interacts with ATP6.</text>
</comment>
<comment type="interaction">
    <interactant intactId="EBI-8059929">
        <id>P53722</id>
    </interactant>
    <interactant intactId="EBI-26978">
        <id>P36046</id>
        <label>MIA40</label>
    </interactant>
    <organismsDiffer>false</organismsDiffer>
    <experiments>5</experiments>
</comment>
<comment type="subcellular location">
    <subcellularLocation>
        <location evidence="1 2">Mitochondrion inner membrane</location>
        <topology evidence="1 2">Peripheral membrane protein</topology>
        <orientation evidence="1 2">Intermembrane side</orientation>
    </subcellularLocation>
    <text>Associates loosely with the inner membrane.</text>
</comment>
<comment type="similarity">
    <text evidence="3">Belongs to the peptidase M76 family.</text>
</comment>
<comment type="sequence caution" evidence="3">
    <conflict type="erroneous initiation">
        <sequence resource="EMBL-CDS" id="CAA96299"/>
    </conflict>
    <text>Extended N-terminus.</text>
</comment>
<comment type="sequence caution" evidence="3">
    <conflict type="erroneous initiation">
        <sequence resource="EMBL-CDS" id="DAA10561"/>
    </conflict>
    <text>Extended N-terminus.</text>
</comment>
<reference key="1">
    <citation type="journal article" date="1997" name="Nature">
        <title>The nucleotide sequence of Saccharomyces cerevisiae chromosome XIV and its evolutionary implications.</title>
        <authorList>
            <person name="Philippsen P."/>
            <person name="Kleine K."/>
            <person name="Poehlmann R."/>
            <person name="Duesterhoeft A."/>
            <person name="Hamberg K."/>
            <person name="Hegemann J.H."/>
            <person name="Obermaier B."/>
            <person name="Urrestarazu L.A."/>
            <person name="Aert R."/>
            <person name="Albermann K."/>
            <person name="Altmann R."/>
            <person name="Andre B."/>
            <person name="Baladron V."/>
            <person name="Ballesta J.P.G."/>
            <person name="Becam A.-M."/>
            <person name="Beinhauer J.D."/>
            <person name="Boskovic J."/>
            <person name="Buitrago M.J."/>
            <person name="Bussereau F."/>
            <person name="Coster F."/>
            <person name="Crouzet M."/>
            <person name="D'Angelo M."/>
            <person name="Dal Pero F."/>
            <person name="De Antoni A."/>
            <person name="del Rey F."/>
            <person name="Doignon F."/>
            <person name="Domdey H."/>
            <person name="Dubois E."/>
            <person name="Fiedler T.A."/>
            <person name="Fleig U."/>
            <person name="Floeth M."/>
            <person name="Fritz C."/>
            <person name="Gaillardin C."/>
            <person name="Garcia-Cantalejo J.M."/>
            <person name="Glansdorff N."/>
            <person name="Goffeau A."/>
            <person name="Gueldener U."/>
            <person name="Herbert C.J."/>
            <person name="Heumann K."/>
            <person name="Heuss-Neitzel D."/>
            <person name="Hilbert H."/>
            <person name="Hinni K."/>
            <person name="Iraqui Houssaini I."/>
            <person name="Jacquet M."/>
            <person name="Jimenez A."/>
            <person name="Jonniaux J.-L."/>
            <person name="Karpfinger-Hartl L."/>
            <person name="Lanfranchi G."/>
            <person name="Lepingle A."/>
            <person name="Levesque H."/>
            <person name="Lyck R."/>
            <person name="Maftahi M."/>
            <person name="Mallet L."/>
            <person name="Maurer C.T.C."/>
            <person name="Messenguy F."/>
            <person name="Mewes H.-W."/>
            <person name="Moestl D."/>
            <person name="Nasr F."/>
            <person name="Nicaud J.-M."/>
            <person name="Niedenthal R.K."/>
            <person name="Pandolfo D."/>
            <person name="Pierard A."/>
            <person name="Piravandi E."/>
            <person name="Planta R.J."/>
            <person name="Pohl T.M."/>
            <person name="Purnelle B."/>
            <person name="Rebischung C."/>
            <person name="Remacha M.A."/>
            <person name="Revuelta J.L."/>
            <person name="Rinke M."/>
            <person name="Saiz J.E."/>
            <person name="Sartorello F."/>
            <person name="Scherens B."/>
            <person name="Sen-Gupta M."/>
            <person name="Soler-Mira A."/>
            <person name="Urbanus J.H.M."/>
            <person name="Valle G."/>
            <person name="Van Dyck L."/>
            <person name="Verhasselt P."/>
            <person name="Vierendeels F."/>
            <person name="Vissers S."/>
            <person name="Voet M."/>
            <person name="Volckaert G."/>
            <person name="Wach A."/>
            <person name="Wambutt R."/>
            <person name="Wedler H."/>
            <person name="Zollner A."/>
            <person name="Hani J."/>
        </authorList>
    </citation>
    <scope>NUCLEOTIDE SEQUENCE [LARGE SCALE GENOMIC DNA]</scope>
    <source>
        <strain>ATCC 204508 / S288c</strain>
    </source>
</reference>
<reference key="2">
    <citation type="journal article" date="2014" name="G3 (Bethesda)">
        <title>The reference genome sequence of Saccharomyces cerevisiae: Then and now.</title>
        <authorList>
            <person name="Engel S.R."/>
            <person name="Dietrich F.S."/>
            <person name="Fisk D.G."/>
            <person name="Binkley G."/>
            <person name="Balakrishnan R."/>
            <person name="Costanzo M.C."/>
            <person name="Dwight S.S."/>
            <person name="Hitz B.C."/>
            <person name="Karra K."/>
            <person name="Nash R.S."/>
            <person name="Weng S."/>
            <person name="Wong E.D."/>
            <person name="Lloyd P."/>
            <person name="Skrzypek M.S."/>
            <person name="Miyasato S.R."/>
            <person name="Simison M."/>
            <person name="Cherry J.M."/>
        </authorList>
    </citation>
    <scope>GENOME REANNOTATION</scope>
    <source>
        <strain>ATCC 204508 / S288c</strain>
    </source>
</reference>
<reference key="3">
    <citation type="submission" date="2003-09" db="EMBL/GenBank/DDBJ databases">
        <title>Verification of 3' and 5' ends of S.cerevisiae transcripts.</title>
        <authorList>
            <person name="Kennedy M.C."/>
            <person name="Dietrich F.S."/>
        </authorList>
    </citation>
    <scope>NUCLEOTIDE SEQUENCE [MRNA] OF 1-84 AND 198-227</scope>
    <source>
        <strain>ATCC 204511 / S288c / AB972</strain>
    </source>
</reference>
<reference key="4">
    <citation type="journal article" date="2007" name="Mol. Biol. Cell">
        <title>The metalloprotease encoded by ATP23 has a dual function in processing and assembly of subunit 6 of mitochondrial ATPase.</title>
        <authorList>
            <person name="Zeng X."/>
            <person name="Neupert W."/>
            <person name="Tzagoloff A."/>
        </authorList>
    </citation>
    <scope>FUNCTION</scope>
    <scope>MUTAGENESIS OF GLU-125</scope>
    <scope>SUBCELLULAR LOCATION</scope>
</reference>
<reference key="5">
    <citation type="journal article" date="2007" name="Mol. Biol. Cell">
        <title>Prohibitins interact genetically with Atp23, a novel processing peptidase and chaperone for the F1F0-ATP synthase.</title>
        <authorList>
            <person name="Osman C."/>
            <person name="Wilmes C."/>
            <person name="Tatsuta T."/>
            <person name="Langer T."/>
        </authorList>
    </citation>
    <scope>FUNCTION</scope>
    <scope>SUBCELLULAR LOCATION</scope>
    <scope>INTERACTION WITH ATP6</scope>
    <scope>MUTAGENESIS OF HIS-124; GLU-125 AND HIS-128</scope>
</reference>
<sequence length="227" mass="26890">MNSSGDNAGFEWWRRTMQYKTGIGLTPEEKTRYEDDSKARELKKECLKCYEYRDWMLKYSPTVRFMVQAITKLNKGSDSKFDDSKIICDYCPDWKGGGFHPELGILLCQNRLRDKWHLEDTLSHELIHYFDDLKWQIDWLNLKHHACSEIRASSLSGECRFWEEFKRRGFRTGFHVARGHQDCVRRRAIISVSGNPNCQSKEHAAKIVDEVWDSCFADTRPFDEIYR</sequence>
<feature type="chain" id="PRO_0000203472" description="Mitochondrial inner membrane protease ATP23">
    <location>
        <begin position="1"/>
        <end position="227"/>
    </location>
</feature>
<feature type="active site">
    <location>
        <position position="125"/>
    </location>
</feature>
<feature type="binding site" evidence="3">
    <location>
        <position position="124"/>
    </location>
    <ligand>
        <name>a divalent metal cation</name>
        <dbReference type="ChEBI" id="CHEBI:60240"/>
        <note>catalytic</note>
    </ligand>
</feature>
<feature type="binding site" evidence="3">
    <location>
        <position position="128"/>
    </location>
    <ligand>
        <name>a divalent metal cation</name>
        <dbReference type="ChEBI" id="CHEBI:60240"/>
        <note>catalytic</note>
    </ligand>
</feature>
<feature type="mutagenesis site" description="Abolishes proteolytic processing of ATP6, but still promotes assembly of the ATP6 precursor into the ATPase CF(0) particle." evidence="1">
    <original>H</original>
    <variation>A</variation>
    <location>
        <position position="124"/>
    </location>
</feature>
<feature type="mutagenesis site" description="Abolishes proteolytic processing of ATP6, but still promotes assembly of the ATP6 precursor into the ATPase CF(0) particle." evidence="1 2">
    <original>E</original>
    <variation>Q</variation>
    <location>
        <position position="125"/>
    </location>
</feature>
<feature type="mutagenesis site" description="Abolishes proteolytic processing of ATP6, but still promotes assembly of the ATP6 precursor into the ATPase CF(0) particle." evidence="1">
    <original>H</original>
    <variation>A</variation>
    <location>
        <position position="128"/>
    </location>
</feature>
<dbReference type="EC" id="3.4.24.-"/>
<dbReference type="EMBL" id="Z71635">
    <property type="protein sequence ID" value="CAA96299.1"/>
    <property type="status" value="ALT_INIT"/>
    <property type="molecule type" value="Genomic_DNA"/>
</dbReference>
<dbReference type="EMBL" id="AH013310">
    <property type="protein sequence ID" value="AAQ97236.1"/>
    <property type="molecule type" value="mRNA"/>
</dbReference>
<dbReference type="EMBL" id="AH013310">
    <property type="protein sequence ID" value="AAQ97237.1"/>
    <property type="molecule type" value="mRNA"/>
</dbReference>
<dbReference type="EMBL" id="BK006947">
    <property type="protein sequence ID" value="DAA10561.1"/>
    <property type="status" value="ALT_INIT"/>
    <property type="molecule type" value="Genomic_DNA"/>
</dbReference>
<dbReference type="PIR" id="S63351">
    <property type="entry name" value="S63351"/>
</dbReference>
<dbReference type="RefSeq" id="NP_014417.3">
    <property type="nucleotide sequence ID" value="NM_001183197.3"/>
</dbReference>
<dbReference type="SMR" id="P53722"/>
<dbReference type="BioGRID" id="35845">
    <property type="interactions" value="481"/>
</dbReference>
<dbReference type="FunCoup" id="P53722">
    <property type="interactions" value="577"/>
</dbReference>
<dbReference type="IntAct" id="P53722">
    <property type="interactions" value="1"/>
</dbReference>
<dbReference type="MINT" id="P53722"/>
<dbReference type="STRING" id="4932.YNR020C"/>
<dbReference type="MEROPS" id="M67.A11"/>
<dbReference type="MEROPS" id="M76.002"/>
<dbReference type="PaxDb" id="4932-YNR020C"/>
<dbReference type="PeptideAtlas" id="P53722"/>
<dbReference type="GeneID" id="855754"/>
<dbReference type="KEGG" id="sce:YNR020C"/>
<dbReference type="AGR" id="SGD:S000005303"/>
<dbReference type="SGD" id="S000005303">
    <property type="gene designation" value="ATP23"/>
</dbReference>
<dbReference type="eggNOG" id="KOG3314">
    <property type="taxonomic scope" value="Eukaryota"/>
</dbReference>
<dbReference type="HOGENOM" id="CLU_079125_0_0_1"/>
<dbReference type="InParanoid" id="P53722"/>
<dbReference type="OrthoDB" id="285308at2759"/>
<dbReference type="BioCyc" id="YEAST:G3O-33334-MONOMER"/>
<dbReference type="BioGRID-ORCS" id="855754">
    <property type="hits" value="8 hits in 10 CRISPR screens"/>
</dbReference>
<dbReference type="PRO" id="PR:P53722"/>
<dbReference type="Proteomes" id="UP000002311">
    <property type="component" value="Chromosome XIV"/>
</dbReference>
<dbReference type="RNAct" id="P53722">
    <property type="molecule type" value="protein"/>
</dbReference>
<dbReference type="GO" id="GO:0005743">
    <property type="term" value="C:mitochondrial inner membrane"/>
    <property type="evidence" value="ECO:0007669"/>
    <property type="project" value="UniProtKB-SubCell"/>
</dbReference>
<dbReference type="GO" id="GO:0005758">
    <property type="term" value="C:mitochondrial intermembrane space"/>
    <property type="evidence" value="ECO:0000314"/>
    <property type="project" value="SGD"/>
</dbReference>
<dbReference type="GO" id="GO:0046872">
    <property type="term" value="F:metal ion binding"/>
    <property type="evidence" value="ECO:0007669"/>
    <property type="project" value="UniProtKB-KW"/>
</dbReference>
<dbReference type="GO" id="GO:0004222">
    <property type="term" value="F:metalloendopeptidase activity"/>
    <property type="evidence" value="ECO:0007669"/>
    <property type="project" value="InterPro"/>
</dbReference>
<dbReference type="GO" id="GO:0034982">
    <property type="term" value="P:mitochondrial protein processing"/>
    <property type="evidence" value="ECO:0000315"/>
    <property type="project" value="SGD"/>
</dbReference>
<dbReference type="GO" id="GO:0033615">
    <property type="term" value="P:mitochondrial proton-transporting ATP synthase complex assembly"/>
    <property type="evidence" value="ECO:0000315"/>
    <property type="project" value="SGD"/>
</dbReference>
<dbReference type="InterPro" id="IPR019165">
    <property type="entry name" value="Peptidase_M76_ATP23"/>
</dbReference>
<dbReference type="PANTHER" id="PTHR21711">
    <property type="entry name" value="MITOCHONDRIAL INNER MEMBRANE PROTEASE"/>
    <property type="match status" value="1"/>
</dbReference>
<dbReference type="PANTHER" id="PTHR21711:SF0">
    <property type="entry name" value="MITOCHONDRIAL INNER MEMBRANE PROTEASE ATP23 HOMOLOG"/>
    <property type="match status" value="1"/>
</dbReference>
<dbReference type="Pfam" id="PF09768">
    <property type="entry name" value="Peptidase_M76"/>
    <property type="match status" value="1"/>
</dbReference>
<dbReference type="PROSITE" id="PS00142">
    <property type="entry name" value="ZINC_PROTEASE"/>
    <property type="match status" value="1"/>
</dbReference>
<accession>P53722</accession>
<accession>D6W1J5</accession>
<accession>Q6TQT3</accession>
<accession>Q6TQT4</accession>
<name>ATP23_YEAST</name>
<keyword id="KW-0378">Hydrolase</keyword>
<keyword id="KW-0472">Membrane</keyword>
<keyword id="KW-0479">Metal-binding</keyword>
<keyword id="KW-0482">Metalloprotease</keyword>
<keyword id="KW-0496">Mitochondrion</keyword>
<keyword id="KW-0999">Mitochondrion inner membrane</keyword>
<keyword id="KW-0645">Protease</keyword>
<keyword id="KW-1185">Reference proteome</keyword>
<evidence type="ECO:0000269" key="1">
    <source>
    </source>
</evidence>
<evidence type="ECO:0000269" key="2">
    <source>
    </source>
</evidence>
<evidence type="ECO:0000305" key="3"/>
<organism>
    <name type="scientific">Saccharomyces cerevisiae (strain ATCC 204508 / S288c)</name>
    <name type="common">Baker's yeast</name>
    <dbReference type="NCBI Taxonomy" id="559292"/>
    <lineage>
        <taxon>Eukaryota</taxon>
        <taxon>Fungi</taxon>
        <taxon>Dikarya</taxon>
        <taxon>Ascomycota</taxon>
        <taxon>Saccharomycotina</taxon>
        <taxon>Saccharomycetes</taxon>
        <taxon>Saccharomycetales</taxon>
        <taxon>Saccharomycetaceae</taxon>
        <taxon>Saccharomyces</taxon>
    </lineage>
</organism>
<protein>
    <recommendedName>
        <fullName>Mitochondrial inner membrane protease ATP23</fullName>
        <ecNumber>3.4.24.-</ecNumber>
    </recommendedName>
</protein>
<proteinExistence type="evidence at protein level"/>
<gene>
    <name type="primary">ATP23</name>
    <name type="ordered locus">YNR020C</name>
    <name type="ORF">N3212</name>
</gene>